<feature type="chain" id="PRO_0000122939" description="DNA repair protein RAD51 homolog 2">
    <location>
        <begin position="1"/>
        <end position="384"/>
    </location>
</feature>
<feature type="region of interest" description="Interaction with RAD51C">
    <location>
        <begin position="1"/>
        <end position="75"/>
    </location>
</feature>
<feature type="binding site" evidence="1">
    <location>
        <begin position="108"/>
        <end position="115"/>
    </location>
    <ligand>
        <name>ATP</name>
        <dbReference type="ChEBI" id="CHEBI:30616"/>
    </ligand>
</feature>
<feature type="site" description="Breakpoint for translocation to form HMGA2-RAD51B">
    <location>
        <begin position="252"/>
        <end position="253"/>
    </location>
</feature>
<feature type="splice variant" id="VSP_008817" description="In isoform 5." evidence="22">
    <location>
        <begin position="1"/>
        <end position="119"/>
    </location>
</feature>
<feature type="splice variant" id="VSP_008819" description="In isoform 2." evidence="19 20 23">
    <original>ETTFCSVTQAELNWAPEILPPQPPEQLGLQMCHHTQLIF</original>
    <variation>AYGNS</variation>
    <location>
        <begin position="346"/>
        <end position="384"/>
    </location>
</feature>
<feature type="splice variant" id="VSP_008818" description="In isoform 3 and isoform 5." evidence="21 22">
    <original>ETTFCSVTQAELNWAPEILPPQPPEQLGLQMCHHTQLIF</original>
    <variation>GQEKP</variation>
    <location>
        <begin position="346"/>
        <end position="384"/>
    </location>
</feature>
<feature type="splice variant" id="VSP_008820" description="In isoform 4." evidence="22">
    <original>TTFCSVTQAELNWAPEILPPQPPEQLGLQMCHHTQLIF</original>
    <variation>FWHICISGFSIQNRLKENES</variation>
    <location>
        <begin position="347"/>
        <end position="384"/>
    </location>
</feature>
<feature type="sequence variant" id="VAR_025243" description="In dbSNP:rs34583846." evidence="18">
    <original>V</original>
    <variation>M</variation>
    <location>
        <position position="9"/>
    </location>
</feature>
<feature type="sequence variant" id="VAR_025244" description="In dbSNP:rs35282642." evidence="18">
    <original>F</original>
    <variation>C</variation>
    <location>
        <position position="82"/>
    </location>
</feature>
<feature type="sequence variant" id="VAR_025245" description="In dbSNP:rs34094401." evidence="18">
    <original>L</original>
    <variation>W</variation>
    <location>
        <position position="172"/>
    </location>
</feature>
<feature type="sequence variant" id="VAR_025246" description="In dbSNP:rs28910275." evidence="18">
    <original>Y</original>
    <variation>C</variation>
    <location>
        <position position="180"/>
    </location>
</feature>
<feature type="sequence variant" id="VAR_035437" description="In dbSNP:rs28908168.">
    <original>V</original>
    <variation>L</variation>
    <location>
        <position position="207"/>
    </location>
</feature>
<feature type="sequence variant" id="VAR_025247" description="In dbSNP:rs34594234." evidence="18">
    <original>K</original>
    <variation>R</variation>
    <location>
        <position position="243"/>
    </location>
</feature>
<feature type="sequence variant" id="VAR_025248" description="In dbSNP:rs33929366." evidence="18">
    <original>S</original>
    <variation>A</variation>
    <location>
        <position position="250"/>
    </location>
</feature>
<feature type="sequence variant" id="VAR_051730" description="In dbSNP:rs28908468.">
    <original>P</original>
    <variation>R</variation>
    <location>
        <position position="365"/>
    </location>
</feature>
<feature type="mutagenesis site" description="Abolishes interaction with BCR-ABL SH3 domain." evidence="12">
    <original>P</original>
    <variation>L</variation>
    <location>
        <position position="326"/>
    </location>
</feature>
<feature type="sequence conflict" description="In Ref. 9; AAN60542/AAN60543/AAN60544." evidence="24" ref="9">
    <original>S</original>
    <variation>P</variation>
    <location>
        <position position="281"/>
    </location>
</feature>
<feature type="helix" evidence="25">
    <location>
        <begin position="6"/>
        <end position="9"/>
    </location>
</feature>
<feature type="helix" evidence="25">
    <location>
        <begin position="13"/>
        <end position="20"/>
    </location>
</feature>
<feature type="turn" evidence="25">
    <location>
        <begin position="21"/>
        <end position="23"/>
    </location>
</feature>
<feature type="helix" evidence="25">
    <location>
        <begin position="27"/>
        <end position="31"/>
    </location>
</feature>
<feature type="helix" evidence="25">
    <location>
        <begin position="35"/>
        <end position="42"/>
    </location>
</feature>
<feature type="helix" evidence="25">
    <location>
        <begin position="46"/>
        <end position="58"/>
    </location>
</feature>
<feature type="helix" evidence="25">
    <location>
        <begin position="67"/>
        <end position="71"/>
    </location>
</feature>
<sequence>MGSKKLKRVGLSQELCDRLSRHQILTCQDFLCLSPLELMKVTGLSYRGVHELLCMVSRACAPKMQTAYGIKAQRSADFSPAFLSTTLSALDEALHGGVACGSLTEITGPPGCGKTQFCIMMSILATLPTNMGGLEGAVVYIDTESAFSAERLVEIAESRFPRYFNTEEKLLLTSSKVHLYRELTCDEVLQRIESLEEEIISKGIKLVILDSVASVVRKEFDAQLQGNLKERNKFLAREASSLKYLAEEFSIPVILTNQITTHLSGALASQADLVSPADDLSLSEGTSGSSCVIAALGNTWSHSVNTRLILQYLDSERRQILIAKSPLAPFTSFVYTIKEEGLVLQETTFCSVTQAELNWAPEILPPQPPEQLGLQMCHHTQLIF</sequence>
<reference key="1">
    <citation type="journal article" date="1997" name="Proc. Natl. Acad. Sci. U.S.A.">
        <title>Isolation of human and mouse genes based on homology to REC2, a recombinational repair gene from the fungus Ustilago maydis.</title>
        <authorList>
            <person name="Rice M.C."/>
            <person name="Smith S.T."/>
            <person name="Bullrich F."/>
            <person name="Havre P."/>
            <person name="Kmiec E.B."/>
        </authorList>
    </citation>
    <scope>NUCLEOTIDE SEQUENCE [MRNA] (ISOFORM 2)</scope>
</reference>
<reference key="2">
    <citation type="journal article" date="1997" name="Genomics">
        <title>Identification of a novel human RAD51 homolog, RAD51B.</title>
        <authorList>
            <person name="Albala J.S."/>
            <person name="Thelen M.P."/>
            <person name="Prange C.K."/>
            <person name="Fan W."/>
            <person name="Christensen M."/>
            <person name="Thompson L.H."/>
            <person name="Lennon G.G."/>
        </authorList>
    </citation>
    <scope>NUCLEOTIDE SEQUENCE [MRNA] (ISOFORM 2)</scope>
</reference>
<reference key="3">
    <citation type="journal article" date="1998" name="Nucleic Acids Res.">
        <title>Isolation of novel human and mouse genes of the recA/RAD51 recombination-repair gene family.</title>
        <authorList>
            <person name="Cartwright R."/>
            <person name="Dunn A.M."/>
            <person name="Simpson P.J."/>
            <person name="Tambini C.E."/>
            <person name="Thacker J."/>
        </authorList>
    </citation>
    <scope>NUCLEOTIDE SEQUENCE [MRNA] (ISOFORM 3)</scope>
</reference>
<reference key="4">
    <citation type="submission" date="2003-02" db="EMBL/GenBank/DDBJ databases">
        <title>Full-length cDNA libraries and normalization.</title>
        <authorList>
            <person name="Li W.B."/>
            <person name="Gruber C."/>
            <person name="Jessee J."/>
            <person name="Polayes D."/>
        </authorList>
    </citation>
    <scope>NUCLEOTIDE SEQUENCE [LARGE SCALE MRNA] (ISOFORMS 1; 4 AND 5)</scope>
    <source>
        <tissue>Neuroblastoma</tissue>
    </source>
</reference>
<reference key="5">
    <citation type="submission" date="2005-08" db="EMBL/GenBank/DDBJ databases">
        <authorList>
            <consortium name="NIEHS SNPs program"/>
        </authorList>
    </citation>
    <scope>NUCLEOTIDE SEQUENCE [GENOMIC DNA]</scope>
    <scope>VARIANTS MET-9; CYS-82; TRP-172; CYS-180; ARG-243 AND ALA-250</scope>
</reference>
<reference key="6">
    <citation type="submission" date="2004-06" db="EMBL/GenBank/DDBJ databases">
        <title>Cloning of human full open reading frames in Gateway(TM) system entry vector (pDONR201).</title>
        <authorList>
            <person name="Ebert L."/>
            <person name="Schick M."/>
            <person name="Neubert P."/>
            <person name="Schatten R."/>
            <person name="Henze S."/>
            <person name="Korn B."/>
        </authorList>
    </citation>
    <scope>NUCLEOTIDE SEQUENCE [LARGE SCALE MRNA] (ISOFORM 2)</scope>
</reference>
<reference key="7">
    <citation type="journal article" date="2003" name="Nature">
        <title>The DNA sequence and analysis of human chromosome 14.</title>
        <authorList>
            <person name="Heilig R."/>
            <person name="Eckenberg R."/>
            <person name="Petit J.-L."/>
            <person name="Fonknechten N."/>
            <person name="Da Silva C."/>
            <person name="Cattolico L."/>
            <person name="Levy M."/>
            <person name="Barbe V."/>
            <person name="De Berardinis V."/>
            <person name="Ureta-Vidal A."/>
            <person name="Pelletier E."/>
            <person name="Vico V."/>
            <person name="Anthouard V."/>
            <person name="Rowen L."/>
            <person name="Madan A."/>
            <person name="Qin S."/>
            <person name="Sun H."/>
            <person name="Du H."/>
            <person name="Pepin K."/>
            <person name="Artiguenave F."/>
            <person name="Robert C."/>
            <person name="Cruaud C."/>
            <person name="Bruels T."/>
            <person name="Jaillon O."/>
            <person name="Friedlander L."/>
            <person name="Samson G."/>
            <person name="Brottier P."/>
            <person name="Cure S."/>
            <person name="Segurens B."/>
            <person name="Aniere F."/>
            <person name="Samain S."/>
            <person name="Crespeau H."/>
            <person name="Abbasi N."/>
            <person name="Aiach N."/>
            <person name="Boscus D."/>
            <person name="Dickhoff R."/>
            <person name="Dors M."/>
            <person name="Dubois I."/>
            <person name="Friedman C."/>
            <person name="Gouyvenoux M."/>
            <person name="James R."/>
            <person name="Madan A."/>
            <person name="Mairey-Estrada B."/>
            <person name="Mangenot S."/>
            <person name="Martins N."/>
            <person name="Menard M."/>
            <person name="Oztas S."/>
            <person name="Ratcliffe A."/>
            <person name="Shaffer T."/>
            <person name="Trask B."/>
            <person name="Vacherie B."/>
            <person name="Bellemere C."/>
            <person name="Belser C."/>
            <person name="Besnard-Gonnet M."/>
            <person name="Bartol-Mavel D."/>
            <person name="Boutard M."/>
            <person name="Briez-Silla S."/>
            <person name="Combette S."/>
            <person name="Dufosse-Laurent V."/>
            <person name="Ferron C."/>
            <person name="Lechaplais C."/>
            <person name="Louesse C."/>
            <person name="Muselet D."/>
            <person name="Magdelenat G."/>
            <person name="Pateau E."/>
            <person name="Petit E."/>
            <person name="Sirvain-Trukniewicz P."/>
            <person name="Trybou A."/>
            <person name="Vega-Czarny N."/>
            <person name="Bataille E."/>
            <person name="Bluet E."/>
            <person name="Bordelais I."/>
            <person name="Dubois M."/>
            <person name="Dumont C."/>
            <person name="Guerin T."/>
            <person name="Haffray S."/>
            <person name="Hammadi R."/>
            <person name="Muanga J."/>
            <person name="Pellouin V."/>
            <person name="Robert D."/>
            <person name="Wunderle E."/>
            <person name="Gauguet G."/>
            <person name="Roy A."/>
            <person name="Sainte-Marthe L."/>
            <person name="Verdier J."/>
            <person name="Verdier-Discala C."/>
            <person name="Hillier L.W."/>
            <person name="Fulton L."/>
            <person name="McPherson J."/>
            <person name="Matsuda F."/>
            <person name="Wilson R."/>
            <person name="Scarpelli C."/>
            <person name="Gyapay G."/>
            <person name="Wincker P."/>
            <person name="Saurin W."/>
            <person name="Quetier F."/>
            <person name="Waterston R."/>
            <person name="Hood L."/>
            <person name="Weissenbach J."/>
        </authorList>
    </citation>
    <scope>NUCLEOTIDE SEQUENCE [LARGE SCALE GENOMIC DNA]</scope>
</reference>
<reference key="8">
    <citation type="submission" date="2005-07" db="EMBL/GenBank/DDBJ databases">
        <authorList>
            <person name="Mural R.J."/>
            <person name="Istrail S."/>
            <person name="Sutton G.G."/>
            <person name="Florea L."/>
            <person name="Halpern A.L."/>
            <person name="Mobarry C.M."/>
            <person name="Lippert R."/>
            <person name="Walenz B."/>
            <person name="Shatkay H."/>
            <person name="Dew I."/>
            <person name="Miller J.R."/>
            <person name="Flanigan M.J."/>
            <person name="Edwards N.J."/>
            <person name="Bolanos R."/>
            <person name="Fasulo D."/>
            <person name="Halldorsson B.V."/>
            <person name="Hannenhalli S."/>
            <person name="Turner R."/>
            <person name="Yooseph S."/>
            <person name="Lu F."/>
            <person name="Nusskern D.R."/>
            <person name="Shue B.C."/>
            <person name="Zheng X.H."/>
            <person name="Zhong F."/>
            <person name="Delcher A.L."/>
            <person name="Huson D.H."/>
            <person name="Kravitz S.A."/>
            <person name="Mouchard L."/>
            <person name="Reinert K."/>
            <person name="Remington K.A."/>
            <person name="Clark A.G."/>
            <person name="Waterman M.S."/>
            <person name="Eichler E.E."/>
            <person name="Adams M.D."/>
            <person name="Hunkapiller M.W."/>
            <person name="Myers E.W."/>
            <person name="Venter J.C."/>
        </authorList>
    </citation>
    <scope>NUCLEOTIDE SEQUENCE [LARGE SCALE GENOMIC DNA]</scope>
</reference>
<reference key="9">
    <citation type="journal article" date="2004" name="Genome Res.">
        <title>The status, quality, and expansion of the NIH full-length cDNA project: the Mammalian Gene Collection (MGC).</title>
        <authorList>
            <consortium name="The MGC Project Team"/>
        </authorList>
    </citation>
    <scope>NUCLEOTIDE SEQUENCE [LARGE SCALE MRNA] (ISOFORM 1)</scope>
    <source>
        <tissue>Lung</tissue>
    </source>
</reference>
<reference key="10">
    <citation type="journal article" date="2003" name="Cancer Res.">
        <title>Fusion transcripts involving HMGA2 are not a common molecular mechanism in uterine leiomyomata with rearrangements in 12q15.</title>
        <authorList>
            <person name="Quade B.J."/>
            <person name="Weremowicz S."/>
            <person name="Neskey D.M."/>
            <person name="Vanni R."/>
            <person name="Ladd C."/>
            <person name="Dal Cin P."/>
            <person name="Morton C.C."/>
        </authorList>
    </citation>
    <scope>NUCLEOTIDE SEQUENCE [MRNA] OF 253-310</scope>
    <scope>CHROMOSOMAL TRANSLOCATION WITH HMGA2</scope>
</reference>
<reference key="11">
    <citation type="journal article" date="2001" name="Genes Dev.">
        <title>Identification and purification of two distinct complexes containing the five RAD51 paralogs.</title>
        <authorList>
            <person name="Masson J.Y."/>
            <person name="Tarsounas M.C."/>
            <person name="Stasiak A.Z."/>
            <person name="Stasiak A."/>
            <person name="Shah R."/>
            <person name="McIlwraith M.J."/>
            <person name="Benson F.E."/>
            <person name="West S.C."/>
        </authorList>
    </citation>
    <scope>FUNCTION</scope>
    <scope>IDENTIFICATION IN THE BCDX2 COMPLEX WITH RAD51C; RAD51D AND XRCC2</scope>
</reference>
<reference key="12">
    <citation type="journal article" date="2001" name="Genes Dev.">
        <title>Mediator function of the human Rad51B-Rad51C complex in Rad51/RPA-catalyzed DNA strand exchange.</title>
        <authorList>
            <person name="Sigurdsson S."/>
            <person name="Van Komen S."/>
            <person name="Bussen W."/>
            <person name="Schild D."/>
            <person name="Albala J.S."/>
            <person name="Sung P."/>
        </authorList>
    </citation>
    <scope>FUNCTION</scope>
    <scope>INTERACTION WITH RAD51C</scope>
</reference>
<reference key="13">
    <citation type="journal article" date="2002" name="Nucleic Acids Res.">
        <title>Involvement of Rad51C in two distinct protein complexes of Rad51 paralogs in human cells.</title>
        <authorList>
            <person name="Liu N."/>
            <person name="Schild D."/>
            <person name="Thelen M.P."/>
            <person name="Thompson L.H."/>
        </authorList>
    </citation>
    <scope>FUNCTION</scope>
    <scope>IDENTIFICATION IN A COMPLEX WITH RAD51C; RAD51D AND XRCC2</scope>
</reference>
<reference key="14">
    <citation type="journal article" date="2002" name="J. Biol. Chem.">
        <title>RAD51C interacts with RAD51B and is central to a larger protein complex in vivo exclusive of RAD51.</title>
        <authorList>
            <person name="Miller K.A."/>
            <person name="Yoshikawa D.M."/>
            <person name="McConnell I.R."/>
            <person name="Clark R."/>
            <person name="Schild D."/>
            <person name="Albala J.S."/>
        </authorList>
    </citation>
    <scope>INTERACTION WITH RAD51C</scope>
    <scope>SUBUNIT</scope>
</reference>
<reference key="15">
    <citation type="journal article" date="2002" name="Nucleic Acids Res.">
        <title>Interactions involving the Rad51 paralogs Rad51C and XRCC3 in human cells.</title>
        <authorList>
            <person name="Wiese C."/>
            <person name="Collins D.W."/>
            <person name="Albala J.S."/>
            <person name="Thompson L.H."/>
            <person name="Kronenberg A."/>
            <person name="Schild D."/>
        </authorList>
    </citation>
    <scope>IDENTIFICATION IN A COMPLEX WITH RAD51C; RAD51D AND XRCC2</scope>
</reference>
<reference key="16">
    <citation type="journal article" date="2003" name="J. Biol. Chem.">
        <title>Complex formation by the human Rad51B and Rad51C DNA repair proteins and their activities in vitro.</title>
        <authorList>
            <person name="Lio Y.-C."/>
            <person name="Mazin A.V."/>
            <person name="Kowalczykowski S.C."/>
            <person name="Chen D.J."/>
        </authorList>
    </citation>
    <scope>INTERACTION WITH RAD51 AND RAD51C</scope>
</reference>
<reference key="17">
    <citation type="journal article" date="1999" name="Cancer Res.">
        <title>Allelic knockout of novel splice variants of human recombination repair gene RAD51B in t(12;14) uterine leiomyomas.</title>
        <authorList>
            <person name="Schoenmakers E.F.P.M."/>
            <person name="Huysmans C."/>
            <person name="Van de Ven W.J.M."/>
        </authorList>
    </citation>
    <scope>CHROMOSOMAL TRANSLOCATION WITH HMGA2</scope>
</reference>
<reference key="18">
    <citation type="journal article" date="2001" name="Cytogenet. Cell Genet.">
        <title>Intragenic breakpoint within RAD51L1 in a t(6;14)(p21.3;q24) of a pulmonary chondroid hamartoma.</title>
        <authorList>
            <person name="Blank C."/>
            <person name="Schoenmakers E.F.P.M."/>
            <person name="Rogalla P."/>
            <person name="Huys E.H."/>
            <person name="van Rijk A.A."/>
            <person name="Drieschner N."/>
            <person name="Bullerdiek J."/>
        </authorList>
    </citation>
    <scope>CHROMOSOMAL TRANSLOCATION WITH HMGA1</scope>
</reference>
<reference key="19">
    <citation type="journal article" date="2003" name="J. Biol. Chem.">
        <title>Holliday junction binding activity of the human Rad51B protein.</title>
        <authorList>
            <person name="Yokoyama H."/>
            <person name="Kurumizaka H."/>
            <person name="Ikawa S."/>
            <person name="Yokoyama S."/>
            <person name="Shibata T."/>
        </authorList>
    </citation>
    <scope>FUNCTION</scope>
</reference>
<reference key="20">
    <citation type="journal article" date="2004" name="Nucleic Acids Res.">
        <title>Domain mapping of the Rad51 paralog protein complexes.</title>
        <authorList>
            <person name="Miller K.A."/>
            <person name="Sawicka D."/>
            <person name="Barsky D."/>
            <person name="Albala J.S."/>
        </authorList>
    </citation>
    <scope>INTERACTION WITH RAD51C</scope>
</reference>
<reference key="21">
    <citation type="journal article" date="2009" name="Leukemia">
        <title>BCR/ABL kinase interacts with and phosphorylates the RAD51 paralog, RAD51B.</title>
        <authorList>
            <person name="Slupianek A."/>
            <person name="Jozwiakowski S.K."/>
            <person name="Gurdek E."/>
            <person name="Skorski T."/>
        </authorList>
    </citation>
    <scope>PHOSPHORYLATION BY BCR-ABL</scope>
    <scope>MUTAGENESIS OF PRO-326</scope>
</reference>
<reference key="22">
    <citation type="journal article" date="2011" name="J. Biol. Chem.">
        <title>hSWS1.SWSAP1 is an evolutionarily conserved complex required for efficient homologous recombination repair.</title>
        <authorList>
            <person name="Liu T."/>
            <person name="Wan L."/>
            <person name="Wu Y."/>
            <person name="Chen J."/>
            <person name="Huang J."/>
        </authorList>
    </citation>
    <scope>INTERACTION WITH SWSAP1</scope>
</reference>
<reference key="23">
    <citation type="journal article" date="2013" name="J. Cell Sci.">
        <title>The RAD51 paralogs ensure cellular protection against mitotic defects and aneuploidy.</title>
        <authorList>
            <person name="Rodrigue A."/>
            <person name="Coulombe Y."/>
            <person name="Jacquet K."/>
            <person name="Gagne J.P."/>
            <person name="Roques C."/>
            <person name="Gobeil S."/>
            <person name="Poirier G."/>
            <person name="Masson J.Y."/>
        </authorList>
    </citation>
    <scope>FUNCTION IN MITOTIC CELL PROGRESSION</scope>
</reference>
<reference key="24">
    <citation type="journal article" date="2013" name="Mol. Cell. Biol.">
        <title>Rad51 paralog complexes BCDX2 and CX3 act at different stages in the BRCA1-BRCA2-dependent homologous recombination pathway.</title>
        <authorList>
            <person name="Chun J."/>
            <person name="Buechelmaier E.S."/>
            <person name="Powell S.N."/>
        </authorList>
    </citation>
    <scope>FUNCTION OF THE BCDX2 COMPLEX</scope>
</reference>
<reference key="25">
    <citation type="journal article" date="2013" name="Nucleic Acids Res.">
        <title>Helq acts in parallel to Fancc to suppress replication-associated genome instability.</title>
        <authorList>
            <person name="Luebben S.W."/>
            <person name="Kawabata T."/>
            <person name="Akre M.K."/>
            <person name="Lee W.L."/>
            <person name="Johnson C.S."/>
            <person name="O'Sullivan M.G."/>
            <person name="Shima N."/>
        </authorList>
    </citation>
    <scope>INTERACTION WITH HELQ</scope>
</reference>
<reference key="26">
    <citation type="journal article" date="2010" name="J. Biol. Chem.">
        <title>Ring-shaped Rad51 paralog protein complexes bind Holliday junctions and replication forks as visualized by electron microscopy.</title>
        <authorList>
            <person name="Compton S.A."/>
            <person name="Ozgur S."/>
            <person name="Griffith J.D."/>
        </authorList>
    </citation>
    <scope>ELECTRON MICROSCOPY OF THE BCDX2 COMPLEX</scope>
    <scope>DNA-BINDING OF THE BCDX2 COMPLEX</scope>
</reference>
<organism>
    <name type="scientific">Homo sapiens</name>
    <name type="common">Human</name>
    <dbReference type="NCBI Taxonomy" id="9606"/>
    <lineage>
        <taxon>Eukaryota</taxon>
        <taxon>Metazoa</taxon>
        <taxon>Chordata</taxon>
        <taxon>Craniata</taxon>
        <taxon>Vertebrata</taxon>
        <taxon>Euteleostomi</taxon>
        <taxon>Mammalia</taxon>
        <taxon>Eutheria</taxon>
        <taxon>Euarchontoglires</taxon>
        <taxon>Primates</taxon>
        <taxon>Haplorrhini</taxon>
        <taxon>Catarrhini</taxon>
        <taxon>Hominidae</taxon>
        <taxon>Homo</taxon>
    </lineage>
</organism>
<evidence type="ECO:0000255" key="1"/>
<evidence type="ECO:0000269" key="2">
    <source>
    </source>
</evidence>
<evidence type="ECO:0000269" key="3">
    <source>
    </source>
</evidence>
<evidence type="ECO:0000269" key="4">
    <source>
    </source>
</evidence>
<evidence type="ECO:0000269" key="5">
    <source>
    </source>
</evidence>
<evidence type="ECO:0000269" key="6">
    <source>
    </source>
</evidence>
<evidence type="ECO:0000269" key="7">
    <source>
    </source>
</evidence>
<evidence type="ECO:0000269" key="8">
    <source>
    </source>
</evidence>
<evidence type="ECO:0000269" key="9">
    <source>
    </source>
</evidence>
<evidence type="ECO:0000269" key="10">
    <source>
    </source>
</evidence>
<evidence type="ECO:0000269" key="11">
    <source>
    </source>
</evidence>
<evidence type="ECO:0000269" key="12">
    <source>
    </source>
</evidence>
<evidence type="ECO:0000269" key="13">
    <source>
    </source>
</evidence>
<evidence type="ECO:0000269" key="14">
    <source>
    </source>
</evidence>
<evidence type="ECO:0000269" key="15">
    <source>
    </source>
</evidence>
<evidence type="ECO:0000269" key="16">
    <source>
    </source>
</evidence>
<evidence type="ECO:0000269" key="17">
    <source>
    </source>
</evidence>
<evidence type="ECO:0000269" key="18">
    <source ref="5"/>
</evidence>
<evidence type="ECO:0000303" key="19">
    <source>
    </source>
</evidence>
<evidence type="ECO:0000303" key="20">
    <source>
    </source>
</evidence>
<evidence type="ECO:0000303" key="21">
    <source>
    </source>
</evidence>
<evidence type="ECO:0000303" key="22">
    <source ref="4"/>
</evidence>
<evidence type="ECO:0000303" key="23">
    <source ref="6"/>
</evidence>
<evidence type="ECO:0000305" key="24"/>
<evidence type="ECO:0007829" key="25">
    <source>
        <dbReference type="PDB" id="8OUZ"/>
    </source>
</evidence>
<comment type="function">
    <text evidence="3 4 6 9 14 15">Involved in the homologous recombination repair (HRR) pathway of double-stranded DNA breaks arising during DNA replication or induced by DNA-damaging agents. May promote the assembly of presynaptic RAD51 nucleoprotein filaments. Binds single-stranded DNA and double-stranded DNA and has DNA-dependent ATPase activity. Part of the RAD51 paralog protein complex BCDX2 which acts in the BRCA1-BRCA2-dependent HR pathway. Upon DNA damage, BCDX2 acts downstream of BRCA2 recruitment and upstream of RAD51 recruitment. BCDX2 binds predominantly to the intersection of the four duplex arms of the Holliday junction and to junction of replication forks. The BCDX2 complex was originally reported to bind single-stranded DNA, single-stranded gaps in duplex DNA and specifically to nicks in duplex DNA. The BCDX2 subcomplex RAD51B:RAD51C exhibits single-stranded DNA-dependent ATPase activity suggesting an involvement in early stages of the HR pathway.</text>
</comment>
<comment type="subunit">
    <text evidence="2 3 4 5 6 8 11 13 16">Part of the BCDX2 complex consisting of RAD51B, RAD51C, RAD51D and XRCC2; the complex has a ring-like structure arranged into a flat disc around a central channel (PubMed:11744692, PubMed:11751635, PubMed:11751636, PubMed:11842112, PubMed:11842113, PubMed:12427746, PubMed:14704354). The BCDX2 subcomplex RAD51B:RAD51C interacts with RAD51 (PubMed:11744692, PubMed:11751635, PubMed:11751636, PubMed:11842112, PubMed:11842113, PubMed:12427746, PubMed:14704354). Interacts with SWSAP1; involved in homologous recombination repair (PubMed:21965664). Interacts with HELQ (PubMed:24005041).</text>
</comment>
<comment type="interaction">
    <interactant intactId="EBI-2824089">
        <id>O15315</id>
    </interactant>
    <interactant intactId="EBI-10175124">
        <id>Q8IZU0</id>
        <label>FAM9B</label>
    </interactant>
    <organismsDiffer>false</organismsDiffer>
    <experiments>3</experiments>
</comment>
<comment type="interaction">
    <interactant intactId="EBI-2824089">
        <id>O15315</id>
    </interactant>
    <interactant intactId="EBI-16439278">
        <id>Q6FHY5</id>
        <label>MEOX2</label>
    </interactant>
    <organismsDiffer>false</organismsDiffer>
    <experiments>3</experiments>
</comment>
<comment type="interaction">
    <interactant intactId="EBI-2824089">
        <id>O15315</id>
    </interactant>
    <interactant intactId="EBI-2267048">
        <id>O43502</id>
        <label>RAD51C</label>
    </interactant>
    <organismsDiffer>false</organismsDiffer>
    <experiments>16</experiments>
</comment>
<comment type="interaction">
    <interactant intactId="EBI-2824089">
        <id>O15315</id>
    </interactant>
    <interactant intactId="EBI-1055693">
        <id>O75771</id>
        <label>RAD51D</label>
    </interactant>
    <organismsDiffer>false</organismsDiffer>
    <experiments>8</experiments>
</comment>
<comment type="interaction">
    <interactant intactId="EBI-2824089">
        <id>O15315</id>
    </interactant>
    <interactant intactId="EBI-3907663">
        <id>Q86UA6</id>
        <label>RPAIN</label>
    </interactant>
    <organismsDiffer>false</organismsDiffer>
    <experiments>3</experiments>
</comment>
<comment type="interaction">
    <interactant intactId="EBI-2824089">
        <id>O15315</id>
    </interactant>
    <interactant intactId="EBI-5281637">
        <id>Q6NVH7</id>
        <label>SWSAP1</label>
    </interactant>
    <organismsDiffer>false</organismsDiffer>
    <experiments>2</experiments>
</comment>
<comment type="subcellular location">
    <subcellularLocation>
        <location evidence="24">Nucleus</location>
    </subcellularLocation>
</comment>
<comment type="alternative products">
    <event type="alternative splicing"/>
    <isoform>
        <id>O15315-3</id>
        <name>1</name>
        <sequence type="displayed"/>
    </isoform>
    <isoform>
        <id>O15315-1</id>
        <name>2</name>
        <name>RAD51L1a</name>
        <sequence type="described" ref="VSP_008819"/>
    </isoform>
    <isoform>
        <id>O15315-2</id>
        <name>3</name>
        <name>RAD51L1b</name>
        <sequence type="described" ref="VSP_008818"/>
    </isoform>
    <isoform>
        <id>O15315-4</id>
        <name>4</name>
        <sequence type="described" ref="VSP_008820"/>
    </isoform>
    <isoform>
        <id>O15315-5</id>
        <name>5</name>
        <sequence type="described" ref="VSP_008817 VSP_008818"/>
    </isoform>
</comment>
<comment type="tissue specificity">
    <text>Expressed in a wide range of tissues.</text>
</comment>
<comment type="PTM">
    <text evidence="12">Phosphorylated on tyrosine residues by BCR-ABL.</text>
</comment>
<comment type="disease">
    <text evidence="7">A chromosomal aberration involving RAD51B is found in pulmonary chondroid hamartoma. Translocation t(6;14)(p21;q23-24) with HMGA1.</text>
</comment>
<comment type="disease">
    <text evidence="10 17">A chromosomal aberration involving RAD51B is found in uterine leiomyoma. Translocation t(12;14)(q15;q23-24) with HMGA2.</text>
</comment>
<comment type="similarity">
    <text evidence="24">Belongs to the RecA family. RAD51 subfamily.</text>
</comment>
<comment type="sequence caution" evidence="24">
    <conflict type="erroneous initiation">
        <sequence resource="EMBL-CDS" id="CAD62357"/>
    </conflict>
    <text>Extended N-terminus.</text>
</comment>
<comment type="sequence caution" evidence="24">
    <conflict type="erroneous initiation">
        <sequence resource="EMBL-CDS" id="CAD66573"/>
    </conflict>
    <text>Extended N-terminus.</text>
</comment>
<protein>
    <recommendedName>
        <fullName>DNA repair protein RAD51 homolog 2</fullName>
        <shortName>R51H2</shortName>
    </recommendedName>
    <alternativeName>
        <fullName>RAD51 homolog B</fullName>
        <shortName>Rad51B</shortName>
    </alternativeName>
    <alternativeName>
        <fullName>RAD51-like protein 1</fullName>
    </alternativeName>
</protein>
<gene>
    <name type="primary">RAD51B</name>
    <name type="synonym">RAD51L1</name>
    <name type="synonym">REC2</name>
</gene>
<dbReference type="EMBL" id="U92074">
    <property type="protein sequence ID" value="AAB63358.1"/>
    <property type="molecule type" value="mRNA"/>
</dbReference>
<dbReference type="EMBL" id="U84138">
    <property type="protein sequence ID" value="AAC39723.1"/>
    <property type="molecule type" value="mRNA"/>
</dbReference>
<dbReference type="EMBL" id="Y15571">
    <property type="protein sequence ID" value="CAA75680.1"/>
    <property type="molecule type" value="mRNA"/>
</dbReference>
<dbReference type="EMBL" id="BX161515">
    <property type="protein sequence ID" value="CAD61950.1"/>
    <property type="molecule type" value="mRNA"/>
</dbReference>
<dbReference type="EMBL" id="BX248061">
    <property type="protein sequence ID" value="CAD62357.1"/>
    <property type="status" value="ALT_INIT"/>
    <property type="molecule type" value="mRNA"/>
</dbReference>
<dbReference type="EMBL" id="BX248766">
    <property type="protein sequence ID" value="CAD66573.1"/>
    <property type="status" value="ALT_INIT"/>
    <property type="molecule type" value="mRNA"/>
</dbReference>
<dbReference type="EMBL" id="DQ160197">
    <property type="protein sequence ID" value="AAZ85144.1"/>
    <property type="molecule type" value="Genomic_DNA"/>
</dbReference>
<dbReference type="EMBL" id="AC004518">
    <property type="protein sequence ID" value="AAC32426.1"/>
    <property type="molecule type" value="Genomic_DNA"/>
</dbReference>
<dbReference type="EMBL" id="AC004518">
    <property type="protein sequence ID" value="AAC32425.1"/>
    <property type="molecule type" value="Genomic_DNA"/>
</dbReference>
<dbReference type="EMBL" id="CR536560">
    <property type="protein sequence ID" value="CAG38797.1"/>
    <property type="molecule type" value="mRNA"/>
</dbReference>
<dbReference type="EMBL" id="CH471061">
    <property type="protein sequence ID" value="EAW80957.1"/>
    <property type="molecule type" value="Genomic_DNA"/>
</dbReference>
<dbReference type="EMBL" id="BC030219">
    <property type="protein sequence ID" value="AAH30219.1"/>
    <property type="molecule type" value="mRNA"/>
</dbReference>
<dbReference type="EMBL" id="AY138857">
    <property type="protein sequence ID" value="AAN60542.1"/>
    <property type="molecule type" value="mRNA"/>
</dbReference>
<dbReference type="EMBL" id="AY138858">
    <property type="protein sequence ID" value="AAN60543.1"/>
    <property type="molecule type" value="mRNA"/>
</dbReference>
<dbReference type="EMBL" id="AY138859">
    <property type="protein sequence ID" value="AAN60544.1"/>
    <property type="molecule type" value="mRNA"/>
</dbReference>
<dbReference type="CCDS" id="CCDS9789.1">
    <molecule id="O15315-3"/>
</dbReference>
<dbReference type="CCDS" id="CCDS9790.1">
    <molecule id="O15315-2"/>
</dbReference>
<dbReference type="RefSeq" id="NP_001308746.1">
    <molecule id="O15315-5"/>
    <property type="nucleotide sequence ID" value="NM_001321817.2"/>
</dbReference>
<dbReference type="RefSeq" id="NP_002868.1">
    <molecule id="O15315-1"/>
    <property type="nucleotide sequence ID" value="NM_002877.6"/>
</dbReference>
<dbReference type="RefSeq" id="NP_598193.2">
    <molecule id="O15315-3"/>
    <property type="nucleotide sequence ID" value="NM_133509.3"/>
</dbReference>
<dbReference type="RefSeq" id="NP_598194.1">
    <molecule id="O15315-2"/>
    <property type="nucleotide sequence ID" value="NM_133510.4"/>
</dbReference>
<dbReference type="PDB" id="8FAZ">
    <property type="method" value="EM"/>
    <property type="resolution" value="2.30 A"/>
    <property type="chains" value="B=1-345"/>
</dbReference>
<dbReference type="PDB" id="8GBJ">
    <property type="method" value="EM"/>
    <property type="resolution" value="3.11 A"/>
    <property type="chains" value="B=1-345"/>
</dbReference>
<dbReference type="PDB" id="8OUY">
    <property type="method" value="EM"/>
    <property type="resolution" value="3.40 A"/>
    <property type="chains" value="A=1-345"/>
</dbReference>
<dbReference type="PDB" id="8OUZ">
    <property type="method" value="EM"/>
    <property type="resolution" value="2.20 A"/>
    <property type="chains" value="A=1-345"/>
</dbReference>
<dbReference type="PDBsum" id="8FAZ"/>
<dbReference type="PDBsum" id="8GBJ"/>
<dbReference type="PDBsum" id="8OUY"/>
<dbReference type="PDBsum" id="8OUZ"/>
<dbReference type="EMDB" id="EMD-17205"/>
<dbReference type="EMDB" id="EMD-17206"/>
<dbReference type="EMDB" id="EMD-28961"/>
<dbReference type="EMDB" id="EMD-29917"/>
<dbReference type="SMR" id="O15315"/>
<dbReference type="BioGRID" id="111827">
    <property type="interactions" value="45"/>
</dbReference>
<dbReference type="ComplexPortal" id="CPX-2363">
    <property type="entry name" value="BCDX2 complex"/>
</dbReference>
<dbReference type="CORUM" id="O15315"/>
<dbReference type="DIP" id="DIP-41246N"/>
<dbReference type="FunCoup" id="O15315">
    <property type="interactions" value="883"/>
</dbReference>
<dbReference type="IntAct" id="O15315">
    <property type="interactions" value="39"/>
</dbReference>
<dbReference type="MINT" id="O15315"/>
<dbReference type="STRING" id="9606.ENSP00000419881"/>
<dbReference type="GlyGen" id="O15315">
    <property type="glycosylation" value="1 site, 1 O-linked glycan (1 site)"/>
</dbReference>
<dbReference type="iPTMnet" id="O15315"/>
<dbReference type="PhosphoSitePlus" id="O15315"/>
<dbReference type="BioMuta" id="RAD51B"/>
<dbReference type="jPOST" id="O15315"/>
<dbReference type="MassIVE" id="O15315"/>
<dbReference type="PaxDb" id="9606-ENSP00000419471"/>
<dbReference type="PeptideAtlas" id="O15315"/>
<dbReference type="ProteomicsDB" id="48575">
    <molecule id="O15315-3"/>
</dbReference>
<dbReference type="ProteomicsDB" id="48576">
    <molecule id="O15315-1"/>
</dbReference>
<dbReference type="ProteomicsDB" id="48577">
    <molecule id="O15315-2"/>
</dbReference>
<dbReference type="ProteomicsDB" id="48578">
    <molecule id="O15315-4"/>
</dbReference>
<dbReference type="ProteomicsDB" id="48579">
    <molecule id="O15315-5"/>
</dbReference>
<dbReference type="Pumba" id="O15315"/>
<dbReference type="TopDownProteomics" id="O15315-2">
    <molecule id="O15315-2"/>
</dbReference>
<dbReference type="Antibodypedia" id="4257">
    <property type="antibodies" value="299 antibodies from 36 providers"/>
</dbReference>
<dbReference type="DNASU" id="5890"/>
<dbReference type="Ensembl" id="ENST00000460526.6">
    <molecule id="O15315-1"/>
    <property type="protein sequence ID" value="ENSP00000518559.1"/>
    <property type="gene ID" value="ENSG00000182185.19"/>
</dbReference>
<dbReference type="Ensembl" id="ENST00000471583.6">
    <molecule id="O15315-2"/>
    <property type="protein sequence ID" value="ENSP00000418859.1"/>
    <property type="gene ID" value="ENSG00000182185.19"/>
</dbReference>
<dbReference type="Ensembl" id="ENST00000487270.5">
    <molecule id="O15315-3"/>
    <property type="protein sequence ID" value="ENSP00000419471.1"/>
    <property type="gene ID" value="ENSG00000182185.19"/>
</dbReference>
<dbReference type="Ensembl" id="ENST00000488612.5">
    <molecule id="O15315-4"/>
    <property type="protein sequence ID" value="ENSP00000420061.1"/>
    <property type="gene ID" value="ENSG00000182185.19"/>
</dbReference>
<dbReference type="GeneID" id="5890"/>
<dbReference type="KEGG" id="hsa:5890"/>
<dbReference type="MANE-Select" id="ENST00000471583.6">
    <molecule id="O15315-2"/>
    <property type="protein sequence ID" value="ENSP00000418859.1"/>
    <property type="RefSeq nucleotide sequence ID" value="NM_133510.4"/>
    <property type="RefSeq protein sequence ID" value="NP_598194.1"/>
</dbReference>
<dbReference type="UCSC" id="uc001xkd.4">
    <molecule id="O15315-3"/>
    <property type="organism name" value="human"/>
</dbReference>
<dbReference type="AGR" id="HGNC:9822"/>
<dbReference type="CTD" id="5890"/>
<dbReference type="DisGeNET" id="5890"/>
<dbReference type="GeneCards" id="RAD51B"/>
<dbReference type="HGNC" id="HGNC:9822">
    <property type="gene designation" value="RAD51B"/>
</dbReference>
<dbReference type="HPA" id="ENSG00000182185">
    <property type="expression patterns" value="Low tissue specificity"/>
</dbReference>
<dbReference type="MalaCards" id="RAD51B"/>
<dbReference type="MIM" id="150699">
    <property type="type" value="phenotype"/>
</dbReference>
<dbReference type="MIM" id="602948">
    <property type="type" value="gene"/>
</dbReference>
<dbReference type="neXtProt" id="NX_O15315"/>
<dbReference type="OpenTargets" id="ENSG00000182185"/>
<dbReference type="PharmGKB" id="PA34178"/>
<dbReference type="VEuPathDB" id="HostDB:ENSG00000182185"/>
<dbReference type="eggNOG" id="KOG1433">
    <property type="taxonomic scope" value="Eukaryota"/>
</dbReference>
<dbReference type="GeneTree" id="ENSGT00940000160169"/>
<dbReference type="HOGENOM" id="CLU_013059_0_0_1"/>
<dbReference type="InParanoid" id="O15315"/>
<dbReference type="OMA" id="IHCQGHN"/>
<dbReference type="OrthoDB" id="5957327at2759"/>
<dbReference type="PAN-GO" id="O15315">
    <property type="GO annotations" value="7 GO annotations based on evolutionary models"/>
</dbReference>
<dbReference type="PhylomeDB" id="O15315"/>
<dbReference type="TreeFam" id="TF101219"/>
<dbReference type="PathwayCommons" id="O15315"/>
<dbReference type="Reactome" id="R-HSA-5685942">
    <property type="pathway name" value="HDR through Homologous Recombination (HRR)"/>
</dbReference>
<dbReference type="Reactome" id="R-HSA-5693554">
    <property type="pathway name" value="Resolution of D-loop Structures through Synthesis-Dependent Strand Annealing (SDSA)"/>
</dbReference>
<dbReference type="Reactome" id="R-HSA-5693568">
    <property type="pathway name" value="Resolution of D-loop Structures through Holliday Junction Intermediates"/>
</dbReference>
<dbReference type="Reactome" id="R-HSA-5693579">
    <property type="pathway name" value="Homologous DNA Pairing and Strand Exchange"/>
</dbReference>
<dbReference type="Reactome" id="R-HSA-5693616">
    <property type="pathway name" value="Presynaptic phase of homologous DNA pairing and strand exchange"/>
</dbReference>
<dbReference type="Reactome" id="R-HSA-9701192">
    <property type="pathway name" value="Defective homologous recombination repair (HRR) due to BRCA1 loss of function"/>
</dbReference>
<dbReference type="Reactome" id="R-HSA-9704331">
    <property type="pathway name" value="Defective HDR through Homologous Recombination Repair (HRR) due to PALB2 loss of BRCA1 binding function"/>
</dbReference>
<dbReference type="Reactome" id="R-HSA-9704646">
    <property type="pathway name" value="Defective HDR through Homologous Recombination Repair (HRR) due to PALB2 loss of BRCA2/RAD51/RAD51C binding function"/>
</dbReference>
<dbReference type="Reactome" id="R-HSA-9709603">
    <property type="pathway name" value="Impaired BRCA2 binding to PALB2"/>
</dbReference>
<dbReference type="Reactome" id="R-HSA-983231">
    <property type="pathway name" value="Factors involved in megakaryocyte development and platelet production"/>
</dbReference>
<dbReference type="SignaLink" id="O15315"/>
<dbReference type="SIGNOR" id="O15315"/>
<dbReference type="BioGRID-ORCS" id="5890">
    <property type="hits" value="121 hits in 1166 CRISPR screens"/>
</dbReference>
<dbReference type="ChiTaRS" id="RAD51B">
    <property type="organism name" value="human"/>
</dbReference>
<dbReference type="GeneWiki" id="RAD51L1"/>
<dbReference type="GenomeRNAi" id="5890"/>
<dbReference type="Pharos" id="O15315">
    <property type="development level" value="Tbio"/>
</dbReference>
<dbReference type="PRO" id="PR:O15315"/>
<dbReference type="Proteomes" id="UP000005640">
    <property type="component" value="Chromosome 14"/>
</dbReference>
<dbReference type="RNAct" id="O15315">
    <property type="molecule type" value="protein"/>
</dbReference>
<dbReference type="Bgee" id="ENSG00000182185">
    <property type="expression patterns" value="Expressed in sural nerve and 126 other cell types or tissues"/>
</dbReference>
<dbReference type="ExpressionAtlas" id="O15315">
    <property type="expression patterns" value="baseline and differential"/>
</dbReference>
<dbReference type="GO" id="GO:0005654">
    <property type="term" value="C:nucleoplasm"/>
    <property type="evidence" value="ECO:0000304"/>
    <property type="project" value="Reactome"/>
</dbReference>
<dbReference type="GO" id="GO:0005634">
    <property type="term" value="C:nucleus"/>
    <property type="evidence" value="ECO:0000304"/>
    <property type="project" value="ProtInc"/>
</dbReference>
<dbReference type="GO" id="GO:0033063">
    <property type="term" value="C:Rad51B-Rad51C-Rad51D-XRCC2 complex"/>
    <property type="evidence" value="ECO:0000314"/>
    <property type="project" value="UniProtKB"/>
</dbReference>
<dbReference type="GO" id="GO:0005657">
    <property type="term" value="C:replication fork"/>
    <property type="evidence" value="ECO:0000314"/>
    <property type="project" value="UniProtKB"/>
</dbReference>
<dbReference type="GO" id="GO:0005524">
    <property type="term" value="F:ATP binding"/>
    <property type="evidence" value="ECO:0007669"/>
    <property type="project" value="UniProtKB-KW"/>
</dbReference>
<dbReference type="GO" id="GO:0016887">
    <property type="term" value="F:ATP hydrolysis activity"/>
    <property type="evidence" value="ECO:0007669"/>
    <property type="project" value="InterPro"/>
</dbReference>
<dbReference type="GO" id="GO:0008094">
    <property type="term" value="F:ATP-dependent activity, acting on DNA"/>
    <property type="evidence" value="ECO:0000314"/>
    <property type="project" value="UniProtKB"/>
</dbReference>
<dbReference type="GO" id="GO:0140664">
    <property type="term" value="F:ATP-dependent DNA damage sensor activity"/>
    <property type="evidence" value="ECO:0007669"/>
    <property type="project" value="InterPro"/>
</dbReference>
<dbReference type="GO" id="GO:0003677">
    <property type="term" value="F:DNA binding"/>
    <property type="evidence" value="ECO:0000304"/>
    <property type="project" value="ProtInc"/>
</dbReference>
<dbReference type="GO" id="GO:0003690">
    <property type="term" value="F:double-stranded DNA binding"/>
    <property type="evidence" value="ECO:0000314"/>
    <property type="project" value="UniProtKB"/>
</dbReference>
<dbReference type="GO" id="GO:0003697">
    <property type="term" value="F:single-stranded DNA binding"/>
    <property type="evidence" value="ECO:0000314"/>
    <property type="project" value="UniProtKB"/>
</dbReference>
<dbReference type="GO" id="GO:0001832">
    <property type="term" value="P:blastocyst growth"/>
    <property type="evidence" value="ECO:0007669"/>
    <property type="project" value="Ensembl"/>
</dbReference>
<dbReference type="GO" id="GO:0006310">
    <property type="term" value="P:DNA recombination"/>
    <property type="evidence" value="ECO:0000304"/>
    <property type="project" value="ProtInc"/>
</dbReference>
<dbReference type="GO" id="GO:0006281">
    <property type="term" value="P:DNA repair"/>
    <property type="evidence" value="ECO:0000304"/>
    <property type="project" value="ProtInc"/>
</dbReference>
<dbReference type="GO" id="GO:0000724">
    <property type="term" value="P:double-strand break repair via homologous recombination"/>
    <property type="evidence" value="ECO:0000315"/>
    <property type="project" value="UniProtKB"/>
</dbReference>
<dbReference type="GO" id="GO:0008284">
    <property type="term" value="P:positive regulation of cell population proliferation"/>
    <property type="evidence" value="ECO:0007669"/>
    <property type="project" value="Ensembl"/>
</dbReference>
<dbReference type="GO" id="GO:0010971">
    <property type="term" value="P:positive regulation of G2/M transition of mitotic cell cycle"/>
    <property type="evidence" value="ECO:0000315"/>
    <property type="project" value="UniProtKB"/>
</dbReference>
<dbReference type="GO" id="GO:0007131">
    <property type="term" value="P:reciprocal meiotic recombination"/>
    <property type="evidence" value="ECO:0000304"/>
    <property type="project" value="ProtInc"/>
</dbReference>
<dbReference type="GO" id="GO:0061053">
    <property type="term" value="P:somite development"/>
    <property type="evidence" value="ECO:0007669"/>
    <property type="project" value="Ensembl"/>
</dbReference>
<dbReference type="CDD" id="cd19493">
    <property type="entry name" value="Rad51B"/>
    <property type="match status" value="1"/>
</dbReference>
<dbReference type="FunFam" id="3.40.50.300:FF:000806">
    <property type="entry name" value="DNA repair protein RAD51 homolog 2"/>
    <property type="match status" value="1"/>
</dbReference>
<dbReference type="Gene3D" id="3.40.50.300">
    <property type="entry name" value="P-loop containing nucleotide triphosphate hydrolases"/>
    <property type="match status" value="1"/>
</dbReference>
<dbReference type="InterPro" id="IPR003593">
    <property type="entry name" value="AAA+_ATPase"/>
</dbReference>
<dbReference type="InterPro" id="IPR013632">
    <property type="entry name" value="DNA_recomb/repair_Rad51_C"/>
</dbReference>
<dbReference type="InterPro" id="IPR016467">
    <property type="entry name" value="DNA_recomb/repair_RecA-like"/>
</dbReference>
<dbReference type="InterPro" id="IPR027417">
    <property type="entry name" value="P-loop_NTPase"/>
</dbReference>
<dbReference type="InterPro" id="IPR030548">
    <property type="entry name" value="RAD51B"/>
</dbReference>
<dbReference type="InterPro" id="IPR020588">
    <property type="entry name" value="RecA_ATP-bd"/>
</dbReference>
<dbReference type="PANTHER" id="PTHR46456">
    <property type="entry name" value="DNA REPAIR PROTEIN RAD51 HOMOLOG 2"/>
    <property type="match status" value="1"/>
</dbReference>
<dbReference type="PANTHER" id="PTHR46456:SF1">
    <property type="entry name" value="DNA REPAIR PROTEIN RAD51 HOMOLOG 2"/>
    <property type="match status" value="1"/>
</dbReference>
<dbReference type="Pfam" id="PF08423">
    <property type="entry name" value="Rad51"/>
    <property type="match status" value="1"/>
</dbReference>
<dbReference type="PIRSF" id="PIRSF005856">
    <property type="entry name" value="Rad51"/>
    <property type="match status" value="1"/>
</dbReference>
<dbReference type="SMART" id="SM00382">
    <property type="entry name" value="AAA"/>
    <property type="match status" value="1"/>
</dbReference>
<dbReference type="SUPFAM" id="SSF52540">
    <property type="entry name" value="P-loop containing nucleoside triphosphate hydrolases"/>
    <property type="match status" value="1"/>
</dbReference>
<dbReference type="PROSITE" id="PS50162">
    <property type="entry name" value="RECA_2"/>
    <property type="match status" value="1"/>
</dbReference>
<name>RA51B_HUMAN</name>
<proteinExistence type="evidence at protein level"/>
<keyword id="KW-0002">3D-structure</keyword>
<keyword id="KW-0025">Alternative splicing</keyword>
<keyword id="KW-0067">ATP-binding</keyword>
<keyword id="KW-0160">Chromosomal rearrangement</keyword>
<keyword id="KW-0227">DNA damage</keyword>
<keyword id="KW-0233">DNA recombination</keyword>
<keyword id="KW-0234">DNA repair</keyword>
<keyword id="KW-0238">DNA-binding</keyword>
<keyword id="KW-0547">Nucleotide-binding</keyword>
<keyword id="KW-0539">Nucleus</keyword>
<keyword id="KW-0597">Phosphoprotein</keyword>
<keyword id="KW-1267">Proteomics identification</keyword>
<keyword id="KW-1185">Reference proteome</keyword>
<accession>O15315</accession>
<accession>O60914</accession>
<accession>O75210</accession>
<accession>Q3Y4F8</accession>
<accession>Q6FHX8</accession>
<accession>Q86SY3</accession>
<accession>Q86SY4</accession>
<accession>Q86TR0</accession>
<accession>Q86U92</accession>
<accession>Q86U93</accession>
<accession>Q86U94</accession>
<accession>Q8N6H4</accession>
<accession>Q9UPL5</accession>